<reference evidence="3" key="1">
    <citation type="journal article" date="2012" name="Peptides">
        <title>Purification and characterization of a novel antimicrobial peptide from Brevibacillus laterosporus strain A60.</title>
        <authorList>
            <person name="Zhao J."/>
            <person name="Guo L."/>
            <person name="Zeng H."/>
            <person name="Yang X."/>
            <person name="Yuan J."/>
            <person name="Shi H."/>
            <person name="Xiong Y."/>
            <person name="Chen M."/>
            <person name="Han L."/>
            <person name="Qiu D."/>
        </authorList>
    </citation>
    <scope>PROTEIN SEQUENCE</scope>
    <scope>FUNCTION</scope>
    <scope>BIOPHYSICOCHEMICAL PROPERTIES</scope>
    <scope>MASS SPECTROMETRY</scope>
    <source>
        <strain evidence="1">A60</strain>
    </source>
</reference>
<protein>
    <recommendedName>
        <fullName evidence="2">Antimicrobial protein BL-A60</fullName>
    </recommendedName>
</protein>
<comment type="function">
    <text evidence="1">Has antibacterial activity against P.solanaceum (MIC=10 uM), X.vesicolor (MIC=100 uM) and B.subtilis (MIC=5 uM). Has antifungal activity against P.capsici (MIC=15 uM), B.cinerea (MIC=25 uM), V.dahliae (MIC=200 uM) and F.omysporum (MIC=50 uM). In P.capsici, inhibits mycelial growth (EC(50)=7.89 ug/ml), formation of sporangia (EC(50)=0.6 ug/ml) and cytospore germination (EC(50)=21.96 ug/ml).</text>
</comment>
<comment type="biophysicochemical properties">
    <phDependence>
        <text evidence="1">Active between pH 3 and 11.</text>
    </phDependence>
    <temperatureDependence>
        <text evidence="1">Retains &gt;80% activity after 15 minutes at 100 degrees Celsius.</text>
    </temperatureDependence>
</comment>
<comment type="PTM">
    <text evidence="1">Contains a choline moiety at the N-terminus and a tenuazonic acid moiety at the C-terminus.</text>
</comment>
<comment type="mass spectrometry"/>
<dbReference type="GO" id="GO:0050832">
    <property type="term" value="P:defense response to fungus"/>
    <property type="evidence" value="ECO:0000314"/>
    <property type="project" value="UniProtKB"/>
</dbReference>
<dbReference type="GO" id="GO:0050829">
    <property type="term" value="P:defense response to Gram-negative bacterium"/>
    <property type="evidence" value="ECO:0000314"/>
    <property type="project" value="UniProtKB"/>
</dbReference>
<dbReference type="GO" id="GO:0050830">
    <property type="term" value="P:defense response to Gram-positive bacterium"/>
    <property type="evidence" value="ECO:0000314"/>
    <property type="project" value="UniProtKB"/>
</dbReference>
<dbReference type="GO" id="GO:0031640">
    <property type="term" value="P:killing of cells of another organism"/>
    <property type="evidence" value="ECO:0007669"/>
    <property type="project" value="UniProtKB-KW"/>
</dbReference>
<evidence type="ECO:0000269" key="1">
    <source>
    </source>
</evidence>
<evidence type="ECO:0000303" key="2">
    <source>
    </source>
</evidence>
<evidence type="ECO:0000305" key="3"/>
<sequence>LYKLVKVVLNM</sequence>
<accession>B3EWC5</accession>
<organism>
    <name type="scientific">Brevibacillus laterosporus</name>
    <name type="common">Bacillus laterosporus</name>
    <dbReference type="NCBI Taxonomy" id="1465"/>
    <lineage>
        <taxon>Bacteria</taxon>
        <taxon>Bacillati</taxon>
        <taxon>Bacillota</taxon>
        <taxon>Bacilli</taxon>
        <taxon>Bacillales</taxon>
        <taxon>Paenibacillaceae</taxon>
        <taxon>Brevibacillus</taxon>
    </lineage>
</organism>
<proteinExistence type="evidence at protein level"/>
<feature type="peptide" id="PRO_0000421853" description="Antimicrobial protein BL-A60" evidence="1">
    <location>
        <begin position="1"/>
        <end position="11"/>
    </location>
</feature>
<name>AMP_BRELA</name>
<keyword id="KW-0044">Antibiotic</keyword>
<keyword id="KW-0929">Antimicrobial</keyword>
<keyword id="KW-0903">Direct protein sequencing</keyword>
<keyword id="KW-0295">Fungicide</keyword>